<proteinExistence type="inferred from homology"/>
<comment type="function">
    <text evidence="1">Necessary for efficient RNA polymerase transcription elongation past template-encoded arresting sites. The arresting sites in DNA have the property of trapping a certain fraction of elongating RNA polymerases that pass through, resulting in locked ternary complexes. Cleavage of the nascent transcript by cleavage factors such as GreA or GreB allows the resumption of elongation from the new 3'terminus. GreA releases sequences of 2 to 3 nucleotides.</text>
</comment>
<comment type="similarity">
    <text evidence="1">Belongs to the GreA/GreB family.</text>
</comment>
<accession>A1BHJ3</accession>
<organism>
    <name type="scientific">Chlorobium phaeobacteroides (strain DSM 266 / SMG 266 / 2430)</name>
    <dbReference type="NCBI Taxonomy" id="290317"/>
    <lineage>
        <taxon>Bacteria</taxon>
        <taxon>Pseudomonadati</taxon>
        <taxon>Chlorobiota</taxon>
        <taxon>Chlorobiia</taxon>
        <taxon>Chlorobiales</taxon>
        <taxon>Chlorobiaceae</taxon>
        <taxon>Chlorobium/Pelodictyon group</taxon>
        <taxon>Chlorobium</taxon>
    </lineage>
</organism>
<protein>
    <recommendedName>
        <fullName evidence="1">Transcription elongation factor GreA</fullName>
    </recommendedName>
    <alternativeName>
        <fullName evidence="1">Transcript cleavage factor GreA</fullName>
    </alternativeName>
</protein>
<sequence>MNDRIYLTRDGYNRLKEELYVLVHQKRKEVLEKIAEARAHGDLSENAEYDAAREEQSLTEAHIADLENKLSTATILDPKQVKTDKVYILTSVKLRDLDKEGEIIEYTLVSSEEADTDLGKISVRSPVGRALIGKTVGEKVQIMVPKGELHYEILEIFVK</sequence>
<dbReference type="EMBL" id="CP000492">
    <property type="protein sequence ID" value="ABL65870.1"/>
    <property type="molecule type" value="Genomic_DNA"/>
</dbReference>
<dbReference type="RefSeq" id="WP_011745677.1">
    <property type="nucleotide sequence ID" value="NC_008639.1"/>
</dbReference>
<dbReference type="SMR" id="A1BHJ3"/>
<dbReference type="STRING" id="290317.Cpha266_1854"/>
<dbReference type="KEGG" id="cph:Cpha266_1854"/>
<dbReference type="eggNOG" id="COG0782">
    <property type="taxonomic scope" value="Bacteria"/>
</dbReference>
<dbReference type="HOGENOM" id="CLU_101379_2_0_10"/>
<dbReference type="OrthoDB" id="9808774at2"/>
<dbReference type="Proteomes" id="UP000008701">
    <property type="component" value="Chromosome"/>
</dbReference>
<dbReference type="GO" id="GO:0003677">
    <property type="term" value="F:DNA binding"/>
    <property type="evidence" value="ECO:0007669"/>
    <property type="project" value="UniProtKB-UniRule"/>
</dbReference>
<dbReference type="GO" id="GO:0070063">
    <property type="term" value="F:RNA polymerase binding"/>
    <property type="evidence" value="ECO:0007669"/>
    <property type="project" value="InterPro"/>
</dbReference>
<dbReference type="GO" id="GO:0006354">
    <property type="term" value="P:DNA-templated transcription elongation"/>
    <property type="evidence" value="ECO:0007669"/>
    <property type="project" value="TreeGrafter"/>
</dbReference>
<dbReference type="GO" id="GO:0032784">
    <property type="term" value="P:regulation of DNA-templated transcription elongation"/>
    <property type="evidence" value="ECO:0007669"/>
    <property type="project" value="UniProtKB-UniRule"/>
</dbReference>
<dbReference type="FunFam" id="1.10.287.180:FF:000001">
    <property type="entry name" value="Transcription elongation factor GreA"/>
    <property type="match status" value="1"/>
</dbReference>
<dbReference type="FunFam" id="3.10.50.30:FF:000001">
    <property type="entry name" value="Transcription elongation factor GreA"/>
    <property type="match status" value="1"/>
</dbReference>
<dbReference type="Gene3D" id="3.10.50.30">
    <property type="entry name" value="Transcription elongation factor, GreA/GreB, C-terminal domain"/>
    <property type="match status" value="1"/>
</dbReference>
<dbReference type="Gene3D" id="1.10.287.180">
    <property type="entry name" value="Transcription elongation factor, GreA/GreB, N-terminal domain"/>
    <property type="match status" value="1"/>
</dbReference>
<dbReference type="HAMAP" id="MF_00105">
    <property type="entry name" value="GreA_GreB"/>
    <property type="match status" value="1"/>
</dbReference>
<dbReference type="InterPro" id="IPR036953">
    <property type="entry name" value="GreA/GreB_C_sf"/>
</dbReference>
<dbReference type="InterPro" id="IPR018151">
    <property type="entry name" value="TF_GreA/GreB_CS"/>
</dbReference>
<dbReference type="InterPro" id="IPR006359">
    <property type="entry name" value="Tscrpt_elong_fac_GreA"/>
</dbReference>
<dbReference type="InterPro" id="IPR028624">
    <property type="entry name" value="Tscrpt_elong_fac_GreA/B"/>
</dbReference>
<dbReference type="InterPro" id="IPR001437">
    <property type="entry name" value="Tscrpt_elong_fac_GreA/B_C"/>
</dbReference>
<dbReference type="InterPro" id="IPR023459">
    <property type="entry name" value="Tscrpt_elong_fac_GreA/B_fam"/>
</dbReference>
<dbReference type="InterPro" id="IPR022691">
    <property type="entry name" value="Tscrpt_elong_fac_GreA/B_N"/>
</dbReference>
<dbReference type="InterPro" id="IPR036805">
    <property type="entry name" value="Tscrpt_elong_fac_GreA/B_N_sf"/>
</dbReference>
<dbReference type="NCBIfam" id="TIGR01462">
    <property type="entry name" value="greA"/>
    <property type="match status" value="1"/>
</dbReference>
<dbReference type="NCBIfam" id="NF001261">
    <property type="entry name" value="PRK00226.1-2"/>
    <property type="match status" value="1"/>
</dbReference>
<dbReference type="NCBIfam" id="NF001263">
    <property type="entry name" value="PRK00226.1-4"/>
    <property type="match status" value="1"/>
</dbReference>
<dbReference type="PANTHER" id="PTHR30437">
    <property type="entry name" value="TRANSCRIPTION ELONGATION FACTOR GREA"/>
    <property type="match status" value="1"/>
</dbReference>
<dbReference type="PANTHER" id="PTHR30437:SF4">
    <property type="entry name" value="TRANSCRIPTION ELONGATION FACTOR GREA"/>
    <property type="match status" value="1"/>
</dbReference>
<dbReference type="Pfam" id="PF01272">
    <property type="entry name" value="GreA_GreB"/>
    <property type="match status" value="1"/>
</dbReference>
<dbReference type="Pfam" id="PF03449">
    <property type="entry name" value="GreA_GreB_N"/>
    <property type="match status" value="1"/>
</dbReference>
<dbReference type="PIRSF" id="PIRSF006092">
    <property type="entry name" value="GreA_GreB"/>
    <property type="match status" value="1"/>
</dbReference>
<dbReference type="SUPFAM" id="SSF54534">
    <property type="entry name" value="FKBP-like"/>
    <property type="match status" value="1"/>
</dbReference>
<dbReference type="SUPFAM" id="SSF46557">
    <property type="entry name" value="GreA transcript cleavage protein, N-terminal domain"/>
    <property type="match status" value="1"/>
</dbReference>
<dbReference type="PROSITE" id="PS00829">
    <property type="entry name" value="GREAB_1"/>
    <property type="match status" value="1"/>
</dbReference>
<dbReference type="PROSITE" id="PS00830">
    <property type="entry name" value="GREAB_2"/>
    <property type="match status" value="1"/>
</dbReference>
<gene>
    <name evidence="1" type="primary">greA</name>
    <name type="ordered locus">Cpha266_1854</name>
</gene>
<name>GREA_CHLPD</name>
<evidence type="ECO:0000255" key="1">
    <source>
        <dbReference type="HAMAP-Rule" id="MF_00105"/>
    </source>
</evidence>
<reference key="1">
    <citation type="submission" date="2006-12" db="EMBL/GenBank/DDBJ databases">
        <title>Complete sequence of Chlorobium phaeobacteroides DSM 266.</title>
        <authorList>
            <consortium name="US DOE Joint Genome Institute"/>
            <person name="Copeland A."/>
            <person name="Lucas S."/>
            <person name="Lapidus A."/>
            <person name="Barry K."/>
            <person name="Detter J.C."/>
            <person name="Glavina del Rio T."/>
            <person name="Hammon N."/>
            <person name="Israni S."/>
            <person name="Pitluck S."/>
            <person name="Goltsman E."/>
            <person name="Schmutz J."/>
            <person name="Larimer F."/>
            <person name="Land M."/>
            <person name="Hauser L."/>
            <person name="Mikhailova N."/>
            <person name="Li T."/>
            <person name="Overmann J."/>
            <person name="Bryant D.A."/>
            <person name="Richardson P."/>
        </authorList>
    </citation>
    <scope>NUCLEOTIDE SEQUENCE [LARGE SCALE GENOMIC DNA]</scope>
    <source>
        <strain>DSM 266 / SMG 266 / 2430</strain>
    </source>
</reference>
<feature type="chain" id="PRO_1000034254" description="Transcription elongation factor GreA">
    <location>
        <begin position="1"/>
        <end position="159"/>
    </location>
</feature>
<feature type="coiled-coil region" evidence="1">
    <location>
        <begin position="47"/>
        <end position="73"/>
    </location>
</feature>
<keyword id="KW-0175">Coiled coil</keyword>
<keyword id="KW-0238">DNA-binding</keyword>
<keyword id="KW-1185">Reference proteome</keyword>
<keyword id="KW-0804">Transcription</keyword>
<keyword id="KW-0805">Transcription regulation</keyword>